<comment type="function">
    <text evidence="2">Reversibly blocks voltage-gated potassium channels Kv1.2/KCNA2, Kv1.3/KCNA3 and, weakly, Shaker B.</text>
</comment>
<comment type="subcellular location">
    <subcellularLocation>
        <location evidence="2">Secreted</location>
    </subcellularLocation>
</comment>
<comment type="tissue specificity">
    <text evidence="5">Expressed by the venom gland.</text>
</comment>
<comment type="domain">
    <text evidence="4">Has the structural arrangement of an alpha-helix connected to antiparallel beta-sheets by disulfide bonds (CS-alpha/beta).</text>
</comment>
<comment type="PTM">
    <text evidence="2">Contains 4 disulfide bonds.</text>
</comment>
<comment type="mass spectrometry"/>
<comment type="miscellaneous">
    <text evidence="2">Negative results: does not inhibit voltage-gated potassium channels Shab, Kv1.2/KCNA1 and Kv1.4/KCNA4.</text>
</comment>
<comment type="similarity">
    <text evidence="4">Belongs to the short scorpion toxin superfamily. Potassium channel inhibitor family. Alpha-KTx 24 subfamily.</text>
</comment>
<protein>
    <recommendedName>
        <fullName evidence="3">Potassium channel toxin alpha-KTx 24.1</fullName>
    </recommendedName>
    <alternativeName>
        <fullName evidence="3">Potassium channel-blocking toxin 5</fullName>
        <shortName evidence="3">Pi5</shortName>
    </alternativeName>
</protein>
<sequence>VAKCSTSECGHACQQAGCRNSGCRYGSCICVGC</sequence>
<name>KA241_PANIM</name>
<reference key="1">
    <citation type="journal article" date="2017" name="Toxicon">
        <title>Pi5 and Pi6, two undescribed peptides from the venom of the scorpion Pandinus imperator and their effects on K(+)-channels.</title>
        <authorList>
            <person name="Olamendi-Portugal T."/>
            <person name="Csoti A."/>
            <person name="Jimenez-Vargas J.M."/>
            <person name="Gomez-Lagunas F."/>
            <person name="Panyi G."/>
            <person name="Possani L.D."/>
        </authorList>
    </citation>
    <scope>PROTEIN SEQUENCE</scope>
    <scope>FUNCTION</scope>
    <scope>SUBCELLULAR LOCATION</scope>
    <scope>PRESENCE OF DISULFIDE BONDS</scope>
    <scope>MASS SPECTROMETRY</scope>
    <scope>IDENTIFICATION BY MASS SPECTROMETRY</scope>
    <source>
        <tissue>Venom</tissue>
    </source>
</reference>
<feature type="peptide" id="PRO_0000444165" description="Potassium channel toxin alpha-KTx 24.1" evidence="2">
    <location>
        <begin position="1"/>
        <end position="33"/>
    </location>
</feature>
<feature type="disulfide bond" evidence="1">
    <location>
        <begin position="4"/>
        <end position="23"/>
    </location>
</feature>
<feature type="disulfide bond" evidence="1">
    <location>
        <begin position="9"/>
        <end position="28"/>
    </location>
</feature>
<feature type="disulfide bond" evidence="1">
    <location>
        <begin position="13"/>
        <end position="30"/>
    </location>
</feature>
<feature type="disulfide bond" evidence="1">
    <location>
        <begin position="18"/>
        <end position="33"/>
    </location>
</feature>
<organism evidence="3">
    <name type="scientific">Pandinus imperator</name>
    <name type="common">Emperor scorpion</name>
    <dbReference type="NCBI Taxonomy" id="55084"/>
    <lineage>
        <taxon>Eukaryota</taxon>
        <taxon>Metazoa</taxon>
        <taxon>Ecdysozoa</taxon>
        <taxon>Arthropoda</taxon>
        <taxon>Chelicerata</taxon>
        <taxon>Arachnida</taxon>
        <taxon>Scorpiones</taxon>
        <taxon>Iurida</taxon>
        <taxon>Scorpionoidea</taxon>
        <taxon>Scorpionidae</taxon>
        <taxon>Pandininae</taxon>
        <taxon>Pandinus</taxon>
    </lineage>
</organism>
<keyword id="KW-0903">Direct protein sequencing</keyword>
<keyword id="KW-1015">Disulfide bond</keyword>
<keyword id="KW-0872">Ion channel impairing toxin</keyword>
<keyword id="KW-0632">Potassium channel impairing toxin</keyword>
<keyword id="KW-0964">Secreted</keyword>
<keyword id="KW-0800">Toxin</keyword>
<keyword id="KW-1220">Voltage-gated potassium channel impairing toxin</keyword>
<dbReference type="SMR" id="C0HKB2"/>
<dbReference type="GO" id="GO:0005576">
    <property type="term" value="C:extracellular region"/>
    <property type="evidence" value="ECO:0000314"/>
    <property type="project" value="UniProtKB"/>
</dbReference>
<dbReference type="GO" id="GO:0015459">
    <property type="term" value="F:potassium channel regulator activity"/>
    <property type="evidence" value="ECO:0007669"/>
    <property type="project" value="UniProtKB-KW"/>
</dbReference>
<dbReference type="GO" id="GO:0090729">
    <property type="term" value="F:toxin activity"/>
    <property type="evidence" value="ECO:0007669"/>
    <property type="project" value="UniProtKB-KW"/>
</dbReference>
<dbReference type="GO" id="GO:1903817">
    <property type="term" value="P:negative regulation of voltage-gated potassium channel activity"/>
    <property type="evidence" value="ECO:0000314"/>
    <property type="project" value="UniProtKB"/>
</dbReference>
<evidence type="ECO:0000250" key="1">
    <source>
        <dbReference type="UniProtKB" id="P58498"/>
    </source>
</evidence>
<evidence type="ECO:0000269" key="2">
    <source>
    </source>
</evidence>
<evidence type="ECO:0000303" key="3">
    <source>
    </source>
</evidence>
<evidence type="ECO:0000305" key="4"/>
<evidence type="ECO:0000305" key="5">
    <source>
    </source>
</evidence>
<proteinExistence type="evidence at protein level"/>
<accession>C0HKB2</accession>